<keyword id="KW-0963">Cytoplasm</keyword>
<keyword id="KW-0444">Lipid biosynthesis</keyword>
<keyword id="KW-0443">Lipid metabolism</keyword>
<keyword id="KW-0594">Phospholipid biosynthesis</keyword>
<keyword id="KW-1208">Phospholipid metabolism</keyword>
<keyword id="KW-0808">Transferase</keyword>
<proteinExistence type="inferred from homology"/>
<reference key="1">
    <citation type="journal article" date="2006" name="BMC Genomics">
        <title>Complete genome sequence of Shigella flexneri 5b and comparison with Shigella flexneri 2a.</title>
        <authorList>
            <person name="Nie H."/>
            <person name="Yang F."/>
            <person name="Zhang X."/>
            <person name="Yang J."/>
            <person name="Chen L."/>
            <person name="Wang J."/>
            <person name="Xiong Z."/>
            <person name="Peng J."/>
            <person name="Sun L."/>
            <person name="Dong J."/>
            <person name="Xue Y."/>
            <person name="Xu X."/>
            <person name="Chen S."/>
            <person name="Yao Z."/>
            <person name="Shen Y."/>
            <person name="Jin Q."/>
        </authorList>
    </citation>
    <scope>NUCLEOTIDE SEQUENCE [LARGE SCALE GENOMIC DNA]</scope>
    <source>
        <strain>8401</strain>
    </source>
</reference>
<feature type="chain" id="PRO_0000329265" description="Phosphate acyltransferase">
    <location>
        <begin position="1"/>
        <end position="356"/>
    </location>
</feature>
<evidence type="ECO:0000255" key="1">
    <source>
        <dbReference type="HAMAP-Rule" id="MF_00019"/>
    </source>
</evidence>
<evidence type="ECO:0000305" key="2"/>
<accession>Q0T5U6</accession>
<comment type="function">
    <text evidence="1">Catalyzes the reversible formation of acyl-phosphate (acyl-PO(4)) from acyl-[acyl-carrier-protein] (acyl-ACP). This enzyme utilizes acyl-ACP as fatty acyl donor, but not acyl-CoA.</text>
</comment>
<comment type="catalytic activity">
    <reaction evidence="1">
        <text>a fatty acyl-[ACP] + phosphate = an acyl phosphate + holo-[ACP]</text>
        <dbReference type="Rhea" id="RHEA:42292"/>
        <dbReference type="Rhea" id="RHEA-COMP:9685"/>
        <dbReference type="Rhea" id="RHEA-COMP:14125"/>
        <dbReference type="ChEBI" id="CHEBI:43474"/>
        <dbReference type="ChEBI" id="CHEBI:59918"/>
        <dbReference type="ChEBI" id="CHEBI:64479"/>
        <dbReference type="ChEBI" id="CHEBI:138651"/>
        <dbReference type="EC" id="2.3.1.274"/>
    </reaction>
</comment>
<comment type="pathway">
    <text evidence="1">Lipid metabolism; phospholipid metabolism.</text>
</comment>
<comment type="subunit">
    <text evidence="1">Homodimer. Probably interacts with PlsY.</text>
</comment>
<comment type="subcellular location">
    <subcellularLocation>
        <location evidence="1">Cytoplasm</location>
    </subcellularLocation>
    <text evidence="1">Associated with the membrane possibly through PlsY.</text>
</comment>
<comment type="similarity">
    <text evidence="1">Belongs to the PlsX family.</text>
</comment>
<comment type="sequence caution" evidence="2">
    <conflict type="erroneous initiation">
        <sequence resource="EMBL-CDS" id="ABF03319"/>
    </conflict>
</comment>
<sequence>MTRLTLALDVMGGDFGPSVTVPAALQALNSNSQLTLLLVGNPDAITPLLAKADFEQRSRLQIIPAQSVIASDARPSQAIRASRGSSMRMALELVKEGRAQACVSAGNTGALMGLAKLLLKPLEGIERPALVTVLPHQQKGKTVVLDLGANVDCDSTMLVQFAIMGSVLAEEVVEIPNPRVALLNIGEEEVKGLDSIRDASAVLKTIPSINYIGYLEANELLTGKTDVLVCDGFTGNVTLKTMEGVVRMFLSLLKSQGEGKKRSWWLLLLKRWLQKSLTRRFSHLNPDQYNGACLLGLRGTVIKSHGAANQRAFAVAIEQAVQAVQRQVPQRIAARLESVYPAGFELLDGGKSGTLR</sequence>
<name>PLSX_SHIF8</name>
<protein>
    <recommendedName>
        <fullName evidence="1">Phosphate acyltransferase</fullName>
        <ecNumber evidence="1">2.3.1.274</ecNumber>
    </recommendedName>
    <alternativeName>
        <fullName evidence="1">Acyl-ACP phosphotransacylase</fullName>
    </alternativeName>
    <alternativeName>
        <fullName evidence="1">Acyl-[acyl-carrier-protein]--phosphate acyltransferase</fullName>
    </alternativeName>
    <alternativeName>
        <fullName evidence="1">Phosphate-acyl-ACP acyltransferase</fullName>
    </alternativeName>
</protein>
<organism>
    <name type="scientific">Shigella flexneri serotype 5b (strain 8401)</name>
    <dbReference type="NCBI Taxonomy" id="373384"/>
    <lineage>
        <taxon>Bacteria</taxon>
        <taxon>Pseudomonadati</taxon>
        <taxon>Pseudomonadota</taxon>
        <taxon>Gammaproteobacteria</taxon>
        <taxon>Enterobacterales</taxon>
        <taxon>Enterobacteriaceae</taxon>
        <taxon>Shigella</taxon>
    </lineage>
</organism>
<gene>
    <name evidence="1" type="primary">plsX</name>
    <name type="ordered locus">SFV_1110</name>
</gene>
<dbReference type="EC" id="2.3.1.274" evidence="1"/>
<dbReference type="EMBL" id="CP000266">
    <property type="protein sequence ID" value="ABF03319.1"/>
    <property type="status" value="ALT_INIT"/>
    <property type="molecule type" value="Genomic_DNA"/>
</dbReference>
<dbReference type="RefSeq" id="WP_000197568.1">
    <property type="nucleotide sequence ID" value="NC_008258.1"/>
</dbReference>
<dbReference type="SMR" id="Q0T5U6"/>
<dbReference type="KEGG" id="sfv:SFV_1110"/>
<dbReference type="HOGENOM" id="CLU_039379_1_0_6"/>
<dbReference type="UniPathway" id="UPA00085"/>
<dbReference type="Proteomes" id="UP000000659">
    <property type="component" value="Chromosome"/>
</dbReference>
<dbReference type="GO" id="GO:0005737">
    <property type="term" value="C:cytoplasm"/>
    <property type="evidence" value="ECO:0007669"/>
    <property type="project" value="UniProtKB-SubCell"/>
</dbReference>
<dbReference type="GO" id="GO:0043811">
    <property type="term" value="F:phosphate:acyl-[acyl carrier protein] acyltransferase activity"/>
    <property type="evidence" value="ECO:0007669"/>
    <property type="project" value="UniProtKB-UniRule"/>
</dbReference>
<dbReference type="GO" id="GO:0006633">
    <property type="term" value="P:fatty acid biosynthetic process"/>
    <property type="evidence" value="ECO:0007669"/>
    <property type="project" value="UniProtKB-UniRule"/>
</dbReference>
<dbReference type="GO" id="GO:0008654">
    <property type="term" value="P:phospholipid biosynthetic process"/>
    <property type="evidence" value="ECO:0007669"/>
    <property type="project" value="UniProtKB-KW"/>
</dbReference>
<dbReference type="FunFam" id="3.40.718.10:FF:000008">
    <property type="entry name" value="Phosphate acyltransferase"/>
    <property type="match status" value="1"/>
</dbReference>
<dbReference type="Gene3D" id="3.40.718.10">
    <property type="entry name" value="Isopropylmalate Dehydrogenase"/>
    <property type="match status" value="1"/>
</dbReference>
<dbReference type="HAMAP" id="MF_00019">
    <property type="entry name" value="PlsX"/>
    <property type="match status" value="1"/>
</dbReference>
<dbReference type="InterPro" id="IPR003664">
    <property type="entry name" value="FA_synthesis"/>
</dbReference>
<dbReference type="InterPro" id="IPR012281">
    <property type="entry name" value="Phospholipid_synth_PlsX-like"/>
</dbReference>
<dbReference type="NCBIfam" id="TIGR00182">
    <property type="entry name" value="plsX"/>
    <property type="match status" value="1"/>
</dbReference>
<dbReference type="PANTHER" id="PTHR30100">
    <property type="entry name" value="FATTY ACID/PHOSPHOLIPID SYNTHESIS PROTEIN PLSX"/>
    <property type="match status" value="1"/>
</dbReference>
<dbReference type="PANTHER" id="PTHR30100:SF1">
    <property type="entry name" value="PHOSPHATE ACYLTRANSFERASE"/>
    <property type="match status" value="1"/>
</dbReference>
<dbReference type="Pfam" id="PF02504">
    <property type="entry name" value="FA_synthesis"/>
    <property type="match status" value="1"/>
</dbReference>
<dbReference type="PIRSF" id="PIRSF002465">
    <property type="entry name" value="Phsphlp_syn_PlsX"/>
    <property type="match status" value="1"/>
</dbReference>
<dbReference type="SUPFAM" id="SSF53659">
    <property type="entry name" value="Isocitrate/Isopropylmalate dehydrogenase-like"/>
    <property type="match status" value="1"/>
</dbReference>